<gene>
    <name evidence="1" type="primary">yeiP</name>
    <name type="ordered locus">Ecok1_20750</name>
    <name type="ORF">APECO1_4383</name>
</gene>
<protein>
    <recommendedName>
        <fullName evidence="1">Elongation factor P-like protein</fullName>
    </recommendedName>
</protein>
<sequence>MPRANEIKKGMVLNYNGKLLLVKDIDIQSPTARGAATLYKMRFSDVRTGLKVEERFKGDDIVDTVTLTRRYVDFSYVDGNEYVFMDKEDYTPYTFTKDQIEEELLFMPEGGMPDMQVLTWDGQLLALELPQTVDLEIVETAPGIKGASASARNKPATLSTGLVIQVPEYLSPGEKIRIHIEERRYMGRAD</sequence>
<proteinExistence type="inferred from homology"/>
<accession>A1AD29</accession>
<reference key="1">
    <citation type="journal article" date="2007" name="J. Bacteriol.">
        <title>The genome sequence of avian pathogenic Escherichia coli strain O1:K1:H7 shares strong similarities with human extraintestinal pathogenic E. coli genomes.</title>
        <authorList>
            <person name="Johnson T.J."/>
            <person name="Kariyawasam S."/>
            <person name="Wannemuehler Y."/>
            <person name="Mangiamele P."/>
            <person name="Johnson S.J."/>
            <person name="Doetkott C."/>
            <person name="Skyberg J.A."/>
            <person name="Lynne A.M."/>
            <person name="Johnson J.R."/>
            <person name="Nolan L.K."/>
        </authorList>
    </citation>
    <scope>NUCLEOTIDE SEQUENCE [LARGE SCALE GENOMIC DNA]</scope>
</reference>
<keyword id="KW-1185">Reference proteome</keyword>
<comment type="similarity">
    <text evidence="1">Belongs to the elongation factor P family.</text>
</comment>
<comment type="sequence caution" evidence="2">
    <conflict type="erroneous initiation">
        <sequence resource="EMBL-CDS" id="ABJ01569"/>
    </conflict>
</comment>
<evidence type="ECO:0000255" key="1">
    <source>
        <dbReference type="HAMAP-Rule" id="MF_00646"/>
    </source>
</evidence>
<evidence type="ECO:0000305" key="2"/>
<feature type="chain" id="PRO_0000384913" description="Elongation factor P-like protein">
    <location>
        <begin position="1"/>
        <end position="190"/>
    </location>
</feature>
<name>EFPL_ECOK1</name>
<organism>
    <name type="scientific">Escherichia coli O1:K1 / APEC</name>
    <dbReference type="NCBI Taxonomy" id="405955"/>
    <lineage>
        <taxon>Bacteria</taxon>
        <taxon>Pseudomonadati</taxon>
        <taxon>Pseudomonadota</taxon>
        <taxon>Gammaproteobacteria</taxon>
        <taxon>Enterobacterales</taxon>
        <taxon>Enterobacteriaceae</taxon>
        <taxon>Escherichia</taxon>
    </lineage>
</organism>
<dbReference type="EMBL" id="CP000468">
    <property type="protein sequence ID" value="ABJ01569.1"/>
    <property type="status" value="ALT_INIT"/>
    <property type="molecule type" value="Genomic_DNA"/>
</dbReference>
<dbReference type="RefSeq" id="WP_001136827.1">
    <property type="nucleotide sequence ID" value="NZ_CADILS010000004.1"/>
</dbReference>
<dbReference type="SMR" id="A1AD29"/>
<dbReference type="GeneID" id="93775010"/>
<dbReference type="KEGG" id="ecv:APECO1_4383"/>
<dbReference type="HOGENOM" id="CLU_074944_2_0_6"/>
<dbReference type="Proteomes" id="UP000008216">
    <property type="component" value="Chromosome"/>
</dbReference>
<dbReference type="GO" id="GO:0005829">
    <property type="term" value="C:cytosol"/>
    <property type="evidence" value="ECO:0007669"/>
    <property type="project" value="UniProtKB-ARBA"/>
</dbReference>
<dbReference type="GO" id="GO:0003746">
    <property type="term" value="F:translation elongation factor activity"/>
    <property type="evidence" value="ECO:0007669"/>
    <property type="project" value="UniProtKB-UniRule"/>
</dbReference>
<dbReference type="GO" id="GO:0043043">
    <property type="term" value="P:peptide biosynthetic process"/>
    <property type="evidence" value="ECO:0007669"/>
    <property type="project" value="InterPro"/>
</dbReference>
<dbReference type="CDD" id="cd04470">
    <property type="entry name" value="S1_EF-P_repeat_1"/>
    <property type="match status" value="1"/>
</dbReference>
<dbReference type="CDD" id="cd05794">
    <property type="entry name" value="S1_EF-P_repeat_2"/>
    <property type="match status" value="1"/>
</dbReference>
<dbReference type="FunFam" id="2.40.50.140:FF:000004">
    <property type="entry name" value="Elongation factor P"/>
    <property type="match status" value="1"/>
</dbReference>
<dbReference type="FunFam" id="2.30.30.30:FF:000011">
    <property type="entry name" value="Elongation factor P-like protein"/>
    <property type="match status" value="1"/>
</dbReference>
<dbReference type="FunFam" id="2.40.50.140:FF:000053">
    <property type="entry name" value="Elongation factor P-like protein"/>
    <property type="match status" value="1"/>
</dbReference>
<dbReference type="Gene3D" id="2.30.30.30">
    <property type="match status" value="1"/>
</dbReference>
<dbReference type="Gene3D" id="2.40.50.140">
    <property type="entry name" value="Nucleic acid-binding proteins"/>
    <property type="match status" value="2"/>
</dbReference>
<dbReference type="HAMAP" id="MF_00646">
    <property type="entry name" value="EFP"/>
    <property type="match status" value="1"/>
</dbReference>
<dbReference type="InterPro" id="IPR015365">
    <property type="entry name" value="Elong-fact-P_C"/>
</dbReference>
<dbReference type="InterPro" id="IPR012340">
    <property type="entry name" value="NA-bd_OB-fold"/>
</dbReference>
<dbReference type="InterPro" id="IPR014722">
    <property type="entry name" value="Rib_uL2_dom2"/>
</dbReference>
<dbReference type="InterPro" id="IPR020599">
    <property type="entry name" value="Transl_elong_fac_P/YeiP"/>
</dbReference>
<dbReference type="InterPro" id="IPR013185">
    <property type="entry name" value="Transl_elong_KOW-like"/>
</dbReference>
<dbReference type="InterPro" id="IPR011897">
    <property type="entry name" value="Transl_elong_p-like_YeiP"/>
</dbReference>
<dbReference type="InterPro" id="IPR001059">
    <property type="entry name" value="Transl_elong_P/YeiP_cen"/>
</dbReference>
<dbReference type="InterPro" id="IPR013852">
    <property type="entry name" value="Transl_elong_P/YeiP_CS"/>
</dbReference>
<dbReference type="InterPro" id="IPR008991">
    <property type="entry name" value="Translation_prot_SH3-like_sf"/>
</dbReference>
<dbReference type="NCBIfam" id="NF001810">
    <property type="entry name" value="PRK00529.1"/>
    <property type="match status" value="1"/>
</dbReference>
<dbReference type="NCBIfam" id="NF003392">
    <property type="entry name" value="PRK04542.1"/>
    <property type="match status" value="1"/>
</dbReference>
<dbReference type="NCBIfam" id="TIGR02178">
    <property type="entry name" value="yeiP"/>
    <property type="match status" value="1"/>
</dbReference>
<dbReference type="PANTHER" id="PTHR30053">
    <property type="entry name" value="ELONGATION FACTOR P"/>
    <property type="match status" value="1"/>
</dbReference>
<dbReference type="PANTHER" id="PTHR30053:SF14">
    <property type="entry name" value="TRANSLATION ELONGATION FACTOR KOW-LIKE DOMAIN-CONTAINING PROTEIN"/>
    <property type="match status" value="1"/>
</dbReference>
<dbReference type="Pfam" id="PF01132">
    <property type="entry name" value="EFP"/>
    <property type="match status" value="1"/>
</dbReference>
<dbReference type="Pfam" id="PF08207">
    <property type="entry name" value="EFP_N"/>
    <property type="match status" value="1"/>
</dbReference>
<dbReference type="Pfam" id="PF09285">
    <property type="entry name" value="Elong-fact-P_C"/>
    <property type="match status" value="1"/>
</dbReference>
<dbReference type="PIRSF" id="PIRSF005901">
    <property type="entry name" value="EF-P"/>
    <property type="match status" value="1"/>
</dbReference>
<dbReference type="SMART" id="SM01185">
    <property type="entry name" value="EFP"/>
    <property type="match status" value="1"/>
</dbReference>
<dbReference type="SMART" id="SM00841">
    <property type="entry name" value="Elong-fact-P_C"/>
    <property type="match status" value="1"/>
</dbReference>
<dbReference type="SUPFAM" id="SSF50249">
    <property type="entry name" value="Nucleic acid-binding proteins"/>
    <property type="match status" value="2"/>
</dbReference>
<dbReference type="SUPFAM" id="SSF50104">
    <property type="entry name" value="Translation proteins SH3-like domain"/>
    <property type="match status" value="1"/>
</dbReference>
<dbReference type="PROSITE" id="PS01275">
    <property type="entry name" value="EFP"/>
    <property type="match status" value="1"/>
</dbReference>